<accession>C1CJS8</accession>
<organism>
    <name type="scientific">Streptococcus pneumoniae (strain P1031)</name>
    <dbReference type="NCBI Taxonomy" id="488223"/>
    <lineage>
        <taxon>Bacteria</taxon>
        <taxon>Bacillati</taxon>
        <taxon>Bacillota</taxon>
        <taxon>Bacilli</taxon>
        <taxon>Lactobacillales</taxon>
        <taxon>Streptococcaceae</taxon>
        <taxon>Streptococcus</taxon>
    </lineage>
</organism>
<keyword id="KW-0067">ATP-binding</keyword>
<keyword id="KW-0173">Coenzyme A biosynthesis</keyword>
<keyword id="KW-0963">Cytoplasm</keyword>
<keyword id="KW-0418">Kinase</keyword>
<keyword id="KW-0547">Nucleotide-binding</keyword>
<keyword id="KW-0808">Transferase</keyword>
<protein>
    <recommendedName>
        <fullName evidence="1">Pantothenate kinase</fullName>
        <ecNumber evidence="1">2.7.1.33</ecNumber>
    </recommendedName>
    <alternativeName>
        <fullName evidence="1">Pantothenic acid kinase</fullName>
    </alternativeName>
</protein>
<sequence>MTNEFLHFEKISRQTWQSLHRKTTPPLTEEELESIKSFNDQISLQDVTDIYLPLAHLIQIYKRTKEDLAFSKGIFLQRESKSQPFIIGVSGSVAVGKSTTSRLLQILLSRTFTDATVELVTTDGFLYPNQTLIEQGILNRKGFPESYDMEALLNFLDRIKNGQDVDIPVYSHEVYDIVPEEKQSVKAADFVIVEGINVFQNPQNDRLYITDFFDFSIYVDAGVDDIESWYLDRFLKMLSLAQNDPDSYYYRFTQMPIGEVEAFAHQVWTSINLTNLQNYIEPTRNRAEVILHKSKNHEIDEIYLKK</sequence>
<proteinExistence type="inferred from homology"/>
<gene>
    <name evidence="1" type="primary">coaA</name>
    <name type="ordered locus">SPP_0845</name>
</gene>
<feature type="chain" id="PRO_1000124812" description="Pantothenate kinase">
    <location>
        <begin position="1"/>
        <end position="306"/>
    </location>
</feature>
<feature type="binding site" evidence="1">
    <location>
        <begin position="91"/>
        <end position="98"/>
    </location>
    <ligand>
        <name>ATP</name>
        <dbReference type="ChEBI" id="CHEBI:30616"/>
    </ligand>
</feature>
<name>COAA_STRZP</name>
<reference key="1">
    <citation type="journal article" date="2010" name="Genome Biol.">
        <title>Structure and dynamics of the pan-genome of Streptococcus pneumoniae and closely related species.</title>
        <authorList>
            <person name="Donati C."/>
            <person name="Hiller N.L."/>
            <person name="Tettelin H."/>
            <person name="Muzzi A."/>
            <person name="Croucher N.J."/>
            <person name="Angiuoli S.V."/>
            <person name="Oggioni M."/>
            <person name="Dunning Hotopp J.C."/>
            <person name="Hu F.Z."/>
            <person name="Riley D.R."/>
            <person name="Covacci A."/>
            <person name="Mitchell T.J."/>
            <person name="Bentley S.D."/>
            <person name="Kilian M."/>
            <person name="Ehrlich G.D."/>
            <person name="Rappuoli R."/>
            <person name="Moxon E.R."/>
            <person name="Masignani V."/>
        </authorList>
    </citation>
    <scope>NUCLEOTIDE SEQUENCE [LARGE SCALE GENOMIC DNA]</scope>
    <source>
        <strain>P1031</strain>
    </source>
</reference>
<comment type="catalytic activity">
    <reaction evidence="1">
        <text>(R)-pantothenate + ATP = (R)-4'-phosphopantothenate + ADP + H(+)</text>
        <dbReference type="Rhea" id="RHEA:16373"/>
        <dbReference type="ChEBI" id="CHEBI:10986"/>
        <dbReference type="ChEBI" id="CHEBI:15378"/>
        <dbReference type="ChEBI" id="CHEBI:29032"/>
        <dbReference type="ChEBI" id="CHEBI:30616"/>
        <dbReference type="ChEBI" id="CHEBI:456216"/>
        <dbReference type="EC" id="2.7.1.33"/>
    </reaction>
</comment>
<comment type="pathway">
    <text evidence="1">Cofactor biosynthesis; coenzyme A biosynthesis; CoA from (R)-pantothenate: step 1/5.</text>
</comment>
<comment type="subcellular location">
    <subcellularLocation>
        <location evidence="1">Cytoplasm</location>
    </subcellularLocation>
</comment>
<comment type="similarity">
    <text evidence="1">Belongs to the prokaryotic pantothenate kinase family.</text>
</comment>
<dbReference type="EC" id="2.7.1.33" evidence="1"/>
<dbReference type="EMBL" id="CP000920">
    <property type="protein sequence ID" value="ACO20339.1"/>
    <property type="molecule type" value="Genomic_DNA"/>
</dbReference>
<dbReference type="RefSeq" id="WP_000180485.1">
    <property type="nucleotide sequence ID" value="NC_012467.1"/>
</dbReference>
<dbReference type="SMR" id="C1CJS8"/>
<dbReference type="GeneID" id="45653803"/>
<dbReference type="KEGG" id="spp:SPP_0845"/>
<dbReference type="HOGENOM" id="CLU_053818_1_1_9"/>
<dbReference type="UniPathway" id="UPA00241">
    <property type="reaction ID" value="UER00352"/>
</dbReference>
<dbReference type="GO" id="GO:0005737">
    <property type="term" value="C:cytoplasm"/>
    <property type="evidence" value="ECO:0007669"/>
    <property type="project" value="UniProtKB-SubCell"/>
</dbReference>
<dbReference type="GO" id="GO:0005524">
    <property type="term" value="F:ATP binding"/>
    <property type="evidence" value="ECO:0007669"/>
    <property type="project" value="UniProtKB-UniRule"/>
</dbReference>
<dbReference type="GO" id="GO:0004594">
    <property type="term" value="F:pantothenate kinase activity"/>
    <property type="evidence" value="ECO:0007669"/>
    <property type="project" value="UniProtKB-UniRule"/>
</dbReference>
<dbReference type="GO" id="GO:0015937">
    <property type="term" value="P:coenzyme A biosynthetic process"/>
    <property type="evidence" value="ECO:0007669"/>
    <property type="project" value="UniProtKB-UniRule"/>
</dbReference>
<dbReference type="CDD" id="cd02025">
    <property type="entry name" value="PanK"/>
    <property type="match status" value="1"/>
</dbReference>
<dbReference type="FunFam" id="3.40.50.300:FF:001646">
    <property type="entry name" value="Pantothenate kinase"/>
    <property type="match status" value="1"/>
</dbReference>
<dbReference type="Gene3D" id="3.40.50.300">
    <property type="entry name" value="P-loop containing nucleotide triphosphate hydrolases"/>
    <property type="match status" value="1"/>
</dbReference>
<dbReference type="HAMAP" id="MF_00215">
    <property type="entry name" value="Pantothen_kinase_1"/>
    <property type="match status" value="1"/>
</dbReference>
<dbReference type="InterPro" id="IPR027417">
    <property type="entry name" value="P-loop_NTPase"/>
</dbReference>
<dbReference type="InterPro" id="IPR004566">
    <property type="entry name" value="PanK"/>
</dbReference>
<dbReference type="InterPro" id="IPR006083">
    <property type="entry name" value="PRK/URK"/>
</dbReference>
<dbReference type="NCBIfam" id="TIGR00554">
    <property type="entry name" value="panK_bact"/>
    <property type="match status" value="1"/>
</dbReference>
<dbReference type="PANTHER" id="PTHR10285">
    <property type="entry name" value="URIDINE KINASE"/>
    <property type="match status" value="1"/>
</dbReference>
<dbReference type="Pfam" id="PF00485">
    <property type="entry name" value="PRK"/>
    <property type="match status" value="1"/>
</dbReference>
<dbReference type="PIRSF" id="PIRSF000545">
    <property type="entry name" value="Pantothenate_kin"/>
    <property type="match status" value="1"/>
</dbReference>
<dbReference type="SUPFAM" id="SSF52540">
    <property type="entry name" value="P-loop containing nucleoside triphosphate hydrolases"/>
    <property type="match status" value="1"/>
</dbReference>
<evidence type="ECO:0000255" key="1">
    <source>
        <dbReference type="HAMAP-Rule" id="MF_00215"/>
    </source>
</evidence>